<evidence type="ECO:0000255" key="1">
    <source>
        <dbReference type="HAMAP-Rule" id="MF_00473"/>
    </source>
</evidence>
<evidence type="ECO:0000305" key="2"/>
<sequence length="547" mass="59096">MDKSAFQKQLAALRDHRSAAPASMRQAFAADPQRFQAFTATDGDLLLDWSKCAVDATTMDLLEKLAAAADLEGRRAAMFAGKKINITEDRAVLHTALRNLSGTGVTVDGQDVKADVLSVLDAMGAFADAIRSGKALGATGKKITDIVNIGIGGSDLGPAMATLALAPYHDGPRAHYVSNIDGAHIHDTLKGLSAETTLFIVASKTFTTVETMTNAQTARDWVQKALGKQAVGKHFAAVSTALDLVAKFGIEADRVFGFWDWVGGRYSVWGAIGLPVMIAVGPRNFRAFLDGAHEMDQHFRTAPLAGNLPALLGLVGWWHRVICGYPARAVIPYDQRLSRLPAYLQQLDMESNGKGVTLDGTPVATPTGPLVWGEPGTNGQHAFFQLLHQGTDFIPVEFLAAAVGHEPELKHQHDLLLANCLAQSEALMKGRTLDEARAQMLAKGMKPADVDKIAPHRVFSGNRPSLTILYRKLDPRTFGRLIALYEHRVFVEGTLFNINSFDQWGVELGKELATGLLPVVEGKESAANRDASTRGLVERIHQLRGSE</sequence>
<accession>Q98BV5</accession>
<organism>
    <name type="scientific">Mesorhizobium japonicum (strain LMG 29417 / CECT 9101 / MAFF 303099)</name>
    <name type="common">Mesorhizobium loti (strain MAFF 303099)</name>
    <dbReference type="NCBI Taxonomy" id="266835"/>
    <lineage>
        <taxon>Bacteria</taxon>
        <taxon>Pseudomonadati</taxon>
        <taxon>Pseudomonadota</taxon>
        <taxon>Alphaproteobacteria</taxon>
        <taxon>Hyphomicrobiales</taxon>
        <taxon>Phyllobacteriaceae</taxon>
        <taxon>Mesorhizobium</taxon>
    </lineage>
</organism>
<comment type="function">
    <text evidence="1">Catalyzes the reversible isomerization of glucose-6-phosphate to fructose-6-phosphate.</text>
</comment>
<comment type="catalytic activity">
    <reaction evidence="1">
        <text>alpha-D-glucose 6-phosphate = beta-D-fructose 6-phosphate</text>
        <dbReference type="Rhea" id="RHEA:11816"/>
        <dbReference type="ChEBI" id="CHEBI:57634"/>
        <dbReference type="ChEBI" id="CHEBI:58225"/>
        <dbReference type="EC" id="5.3.1.9"/>
    </reaction>
</comment>
<comment type="pathway">
    <text evidence="1">Carbohydrate biosynthesis; gluconeogenesis.</text>
</comment>
<comment type="pathway">
    <text evidence="1">Carbohydrate degradation; glycolysis; D-glyceraldehyde 3-phosphate and glycerone phosphate from D-glucose: step 2/4.</text>
</comment>
<comment type="subcellular location">
    <subcellularLocation>
        <location evidence="1">Cytoplasm</location>
    </subcellularLocation>
</comment>
<comment type="similarity">
    <text evidence="1 2">Belongs to the GPI family.</text>
</comment>
<gene>
    <name evidence="1" type="primary">pgi</name>
    <name type="ordered locus">mlr5411</name>
</gene>
<keyword id="KW-0963">Cytoplasm</keyword>
<keyword id="KW-0312">Gluconeogenesis</keyword>
<keyword id="KW-0324">Glycolysis</keyword>
<keyword id="KW-0413">Isomerase</keyword>
<dbReference type="EC" id="5.3.1.9" evidence="1"/>
<dbReference type="EMBL" id="BA000012">
    <property type="protein sequence ID" value="BAB51867.1"/>
    <property type="molecule type" value="Genomic_DNA"/>
</dbReference>
<dbReference type="RefSeq" id="WP_010913205.1">
    <property type="nucleotide sequence ID" value="NC_002678.2"/>
</dbReference>
<dbReference type="SMR" id="Q98BV5"/>
<dbReference type="KEGG" id="mlo:mlr5411"/>
<dbReference type="PATRIC" id="fig|266835.9.peg.4295"/>
<dbReference type="eggNOG" id="COG0166">
    <property type="taxonomic scope" value="Bacteria"/>
</dbReference>
<dbReference type="HOGENOM" id="CLU_017947_3_1_5"/>
<dbReference type="UniPathway" id="UPA00109">
    <property type="reaction ID" value="UER00181"/>
</dbReference>
<dbReference type="UniPathway" id="UPA00138"/>
<dbReference type="Proteomes" id="UP000000552">
    <property type="component" value="Chromosome"/>
</dbReference>
<dbReference type="GO" id="GO:0005829">
    <property type="term" value="C:cytosol"/>
    <property type="evidence" value="ECO:0007669"/>
    <property type="project" value="TreeGrafter"/>
</dbReference>
<dbReference type="GO" id="GO:0097367">
    <property type="term" value="F:carbohydrate derivative binding"/>
    <property type="evidence" value="ECO:0007669"/>
    <property type="project" value="InterPro"/>
</dbReference>
<dbReference type="GO" id="GO:0004347">
    <property type="term" value="F:glucose-6-phosphate isomerase activity"/>
    <property type="evidence" value="ECO:0007669"/>
    <property type="project" value="UniProtKB-UniRule"/>
</dbReference>
<dbReference type="GO" id="GO:0048029">
    <property type="term" value="F:monosaccharide binding"/>
    <property type="evidence" value="ECO:0007669"/>
    <property type="project" value="TreeGrafter"/>
</dbReference>
<dbReference type="GO" id="GO:0006094">
    <property type="term" value="P:gluconeogenesis"/>
    <property type="evidence" value="ECO:0007669"/>
    <property type="project" value="UniProtKB-UniRule"/>
</dbReference>
<dbReference type="GO" id="GO:0051156">
    <property type="term" value="P:glucose 6-phosphate metabolic process"/>
    <property type="evidence" value="ECO:0007669"/>
    <property type="project" value="TreeGrafter"/>
</dbReference>
<dbReference type="GO" id="GO:0006096">
    <property type="term" value="P:glycolytic process"/>
    <property type="evidence" value="ECO:0007669"/>
    <property type="project" value="UniProtKB-UniRule"/>
</dbReference>
<dbReference type="CDD" id="cd05015">
    <property type="entry name" value="SIS_PGI_1"/>
    <property type="match status" value="1"/>
</dbReference>
<dbReference type="CDD" id="cd05016">
    <property type="entry name" value="SIS_PGI_2"/>
    <property type="match status" value="1"/>
</dbReference>
<dbReference type="Gene3D" id="1.10.1390.10">
    <property type="match status" value="1"/>
</dbReference>
<dbReference type="Gene3D" id="3.40.50.10490">
    <property type="entry name" value="Glucose-6-phosphate isomerase like protein, domain 1"/>
    <property type="match status" value="2"/>
</dbReference>
<dbReference type="HAMAP" id="MF_00473">
    <property type="entry name" value="G6P_isomerase"/>
    <property type="match status" value="1"/>
</dbReference>
<dbReference type="InterPro" id="IPR001672">
    <property type="entry name" value="G6P_Isomerase"/>
</dbReference>
<dbReference type="InterPro" id="IPR023096">
    <property type="entry name" value="G6P_Isomerase_C"/>
</dbReference>
<dbReference type="InterPro" id="IPR018189">
    <property type="entry name" value="Phosphoglucose_isomerase_CS"/>
</dbReference>
<dbReference type="InterPro" id="IPR046348">
    <property type="entry name" value="SIS_dom_sf"/>
</dbReference>
<dbReference type="InterPro" id="IPR035476">
    <property type="entry name" value="SIS_PGI_1"/>
</dbReference>
<dbReference type="InterPro" id="IPR035482">
    <property type="entry name" value="SIS_PGI_2"/>
</dbReference>
<dbReference type="NCBIfam" id="NF001211">
    <property type="entry name" value="PRK00179.1"/>
    <property type="match status" value="1"/>
</dbReference>
<dbReference type="PANTHER" id="PTHR11469">
    <property type="entry name" value="GLUCOSE-6-PHOSPHATE ISOMERASE"/>
    <property type="match status" value="1"/>
</dbReference>
<dbReference type="PANTHER" id="PTHR11469:SF1">
    <property type="entry name" value="GLUCOSE-6-PHOSPHATE ISOMERASE"/>
    <property type="match status" value="1"/>
</dbReference>
<dbReference type="Pfam" id="PF00342">
    <property type="entry name" value="PGI"/>
    <property type="match status" value="1"/>
</dbReference>
<dbReference type="PRINTS" id="PR00662">
    <property type="entry name" value="G6PISOMERASE"/>
</dbReference>
<dbReference type="SUPFAM" id="SSF53697">
    <property type="entry name" value="SIS domain"/>
    <property type="match status" value="1"/>
</dbReference>
<dbReference type="PROSITE" id="PS00765">
    <property type="entry name" value="P_GLUCOSE_ISOMERASE_1"/>
    <property type="match status" value="1"/>
</dbReference>
<dbReference type="PROSITE" id="PS00174">
    <property type="entry name" value="P_GLUCOSE_ISOMERASE_2"/>
    <property type="match status" value="1"/>
</dbReference>
<dbReference type="PROSITE" id="PS51463">
    <property type="entry name" value="P_GLUCOSE_ISOMERASE_3"/>
    <property type="match status" value="1"/>
</dbReference>
<proteinExistence type="inferred from homology"/>
<protein>
    <recommendedName>
        <fullName evidence="1">Glucose-6-phosphate isomerase</fullName>
        <shortName evidence="1">GPI</shortName>
        <ecNumber evidence="1">5.3.1.9</ecNumber>
    </recommendedName>
    <alternativeName>
        <fullName evidence="1">Phosphoglucose isomerase</fullName>
        <shortName evidence="1">PGI</shortName>
    </alternativeName>
    <alternativeName>
        <fullName evidence="1">Phosphohexose isomerase</fullName>
        <shortName evidence="1">PHI</shortName>
    </alternativeName>
</protein>
<name>G6PI_RHILO</name>
<reference key="1">
    <citation type="journal article" date="2000" name="DNA Res.">
        <title>Complete genome structure of the nitrogen-fixing symbiotic bacterium Mesorhizobium loti.</title>
        <authorList>
            <person name="Kaneko T."/>
            <person name="Nakamura Y."/>
            <person name="Sato S."/>
            <person name="Asamizu E."/>
            <person name="Kato T."/>
            <person name="Sasamoto S."/>
            <person name="Watanabe A."/>
            <person name="Idesawa K."/>
            <person name="Ishikawa A."/>
            <person name="Kawashima K."/>
            <person name="Kimura T."/>
            <person name="Kishida Y."/>
            <person name="Kiyokawa C."/>
            <person name="Kohara M."/>
            <person name="Matsumoto M."/>
            <person name="Matsuno A."/>
            <person name="Mochizuki Y."/>
            <person name="Nakayama S."/>
            <person name="Nakazaki N."/>
            <person name="Shimpo S."/>
            <person name="Sugimoto M."/>
            <person name="Takeuchi C."/>
            <person name="Yamada M."/>
            <person name="Tabata S."/>
        </authorList>
    </citation>
    <scope>NUCLEOTIDE SEQUENCE [LARGE SCALE GENOMIC DNA]</scope>
    <source>
        <strain>LMG 29417 / CECT 9101 / MAFF 303099</strain>
    </source>
</reference>
<feature type="chain" id="PRO_0000180718" description="Glucose-6-phosphate isomerase">
    <location>
        <begin position="1"/>
        <end position="547"/>
    </location>
</feature>
<feature type="active site" description="Proton donor" evidence="1">
    <location>
        <position position="350"/>
    </location>
</feature>
<feature type="active site" evidence="1">
    <location>
        <position position="381"/>
    </location>
</feature>
<feature type="active site" evidence="1">
    <location>
        <position position="510"/>
    </location>
</feature>